<comment type="function">
    <text>Important for recycling the chief excitatory neurotransmitter, glutamate, during neurotransmission.</text>
</comment>
<comment type="catalytic activity">
    <reaction evidence="2">
        <text>L-glutamate + NAD(+) + H2O = 2-oxoglutarate + NH4(+) + NADH + H(+)</text>
        <dbReference type="Rhea" id="RHEA:15133"/>
        <dbReference type="ChEBI" id="CHEBI:15377"/>
        <dbReference type="ChEBI" id="CHEBI:15378"/>
        <dbReference type="ChEBI" id="CHEBI:16810"/>
        <dbReference type="ChEBI" id="CHEBI:28938"/>
        <dbReference type="ChEBI" id="CHEBI:29985"/>
        <dbReference type="ChEBI" id="CHEBI:57540"/>
        <dbReference type="ChEBI" id="CHEBI:57945"/>
        <dbReference type="EC" id="1.4.1.3"/>
    </reaction>
</comment>
<comment type="catalytic activity">
    <reaction evidence="2">
        <text>L-glutamate + NADP(+) + H2O = 2-oxoglutarate + NH4(+) + NADPH + H(+)</text>
        <dbReference type="Rhea" id="RHEA:11612"/>
        <dbReference type="ChEBI" id="CHEBI:15377"/>
        <dbReference type="ChEBI" id="CHEBI:15378"/>
        <dbReference type="ChEBI" id="CHEBI:16810"/>
        <dbReference type="ChEBI" id="CHEBI:28938"/>
        <dbReference type="ChEBI" id="CHEBI:29985"/>
        <dbReference type="ChEBI" id="CHEBI:57783"/>
        <dbReference type="ChEBI" id="CHEBI:58349"/>
        <dbReference type="EC" id="1.4.1.3"/>
    </reaction>
</comment>
<comment type="subunit">
    <text evidence="1">Homohexamer.</text>
</comment>
<comment type="interaction">
    <interactant intactId="EBI-720168">
        <id>P49448</id>
    </interactant>
    <interactant intactId="EBI-356544">
        <id>P00367</id>
        <label>GLUD1</label>
    </interactant>
    <organismsDiffer>false</organismsDiffer>
    <experiments>2</experiments>
</comment>
<comment type="subcellular location">
    <subcellularLocation>
        <location evidence="4">Mitochondrion matrix</location>
    </subcellularLocation>
</comment>
<comment type="tissue specificity">
    <text>Expressed in retina, testis and, at a lower level, brain.</text>
</comment>
<comment type="PTM">
    <text>Stoichiometry shows that ADP-ribosylation occurs in one subunit per catalytically active homohexamer.</text>
</comment>
<comment type="similarity">
    <text evidence="5">Belongs to the Glu/Leu/Phe/Val dehydrogenases family.</text>
</comment>
<organism>
    <name type="scientific">Homo sapiens</name>
    <name type="common">Human</name>
    <dbReference type="NCBI Taxonomy" id="9606"/>
    <lineage>
        <taxon>Eukaryota</taxon>
        <taxon>Metazoa</taxon>
        <taxon>Chordata</taxon>
        <taxon>Craniata</taxon>
        <taxon>Vertebrata</taxon>
        <taxon>Euteleostomi</taxon>
        <taxon>Mammalia</taxon>
        <taxon>Eutheria</taxon>
        <taxon>Euarchontoglires</taxon>
        <taxon>Primates</taxon>
        <taxon>Haplorrhini</taxon>
        <taxon>Catarrhini</taxon>
        <taxon>Hominidae</taxon>
        <taxon>Homo</taxon>
    </lineage>
</organism>
<dbReference type="EC" id="1.4.1.3"/>
<dbReference type="EMBL" id="X66310">
    <property type="protein sequence ID" value="CAA46995.1"/>
    <property type="molecule type" value="Genomic_DNA"/>
</dbReference>
<dbReference type="EMBL" id="U08997">
    <property type="protein sequence ID" value="AAA20969.1"/>
    <property type="molecule type" value="Genomic_DNA"/>
</dbReference>
<dbReference type="EMBL" id="AK313356">
    <property type="protein sequence ID" value="BAG36157.1"/>
    <property type="molecule type" value="mRNA"/>
</dbReference>
<dbReference type="EMBL" id="AC006144">
    <property type="protein sequence ID" value="AAD05030.1"/>
    <property type="molecule type" value="Genomic_DNA"/>
</dbReference>
<dbReference type="EMBL" id="BC050732">
    <property type="protein sequence ID" value="AAH50732.1"/>
    <property type="molecule type" value="mRNA"/>
</dbReference>
<dbReference type="CCDS" id="CCDS14603.1"/>
<dbReference type="PIR" id="A53719">
    <property type="entry name" value="A53719"/>
</dbReference>
<dbReference type="RefSeq" id="NP_036216.2">
    <property type="nucleotide sequence ID" value="NM_012084.3"/>
</dbReference>
<dbReference type="PDB" id="6G2U">
    <property type="method" value="X-ray"/>
    <property type="resolution" value="2.93 A"/>
    <property type="chains" value="A/B/C/D/E/F=54-558"/>
</dbReference>
<dbReference type="PDBsum" id="6G2U"/>
<dbReference type="SMR" id="P49448"/>
<dbReference type="BioGRID" id="109009">
    <property type="interactions" value="36"/>
</dbReference>
<dbReference type="FunCoup" id="P49448">
    <property type="interactions" value="493"/>
</dbReference>
<dbReference type="IntAct" id="P49448">
    <property type="interactions" value="15"/>
</dbReference>
<dbReference type="MINT" id="P49448"/>
<dbReference type="STRING" id="9606.ENSP00000327589"/>
<dbReference type="BindingDB" id="P49448"/>
<dbReference type="DrugBank" id="DB00142">
    <property type="generic name" value="Glutamic acid"/>
</dbReference>
<dbReference type="DrugBank" id="DB00157">
    <property type="generic name" value="NADH"/>
</dbReference>
<dbReference type="DrugCentral" id="P49448"/>
<dbReference type="GlyGen" id="P49448">
    <property type="glycosylation" value="3 sites, 1 N-linked glycan (1 site), 1 O-linked glycan (1 site)"/>
</dbReference>
<dbReference type="iPTMnet" id="P49448"/>
<dbReference type="PhosphoSitePlus" id="P49448"/>
<dbReference type="SwissPalm" id="P49448"/>
<dbReference type="BioMuta" id="GLUD2"/>
<dbReference type="DMDM" id="13432152"/>
<dbReference type="REPRODUCTION-2DPAGE" id="IPI00027146"/>
<dbReference type="jPOST" id="P49448"/>
<dbReference type="MassIVE" id="P49448"/>
<dbReference type="PaxDb" id="9606-ENSP00000327589"/>
<dbReference type="PeptideAtlas" id="P49448"/>
<dbReference type="ProteomicsDB" id="56012"/>
<dbReference type="Pumba" id="P49448"/>
<dbReference type="Antibodypedia" id="29957">
    <property type="antibodies" value="231 antibodies from 28 providers"/>
</dbReference>
<dbReference type="DNASU" id="2747"/>
<dbReference type="Ensembl" id="ENST00000328078.3">
    <property type="protein sequence ID" value="ENSP00000327589.1"/>
    <property type="gene ID" value="ENSG00000182890.5"/>
</dbReference>
<dbReference type="Ensembl" id="ENST00000673493.1">
    <property type="protein sequence ID" value="ENSP00000500546.1"/>
    <property type="gene ID" value="ENSG00000288118.1"/>
</dbReference>
<dbReference type="GeneID" id="2747"/>
<dbReference type="KEGG" id="hsa:2747"/>
<dbReference type="MANE-Select" id="ENST00000328078.3">
    <property type="protein sequence ID" value="ENSP00000327589.1"/>
    <property type="RefSeq nucleotide sequence ID" value="NM_012084.4"/>
    <property type="RefSeq protein sequence ID" value="NP_036216.2"/>
</dbReference>
<dbReference type="UCSC" id="uc004eto.4">
    <property type="organism name" value="human"/>
</dbReference>
<dbReference type="AGR" id="HGNC:4336"/>
<dbReference type="CTD" id="2747"/>
<dbReference type="DisGeNET" id="2747"/>
<dbReference type="GeneCards" id="GLUD2"/>
<dbReference type="HGNC" id="HGNC:4336">
    <property type="gene designation" value="GLUD2"/>
</dbReference>
<dbReference type="HPA" id="ENSG00000182890">
    <property type="expression patterns" value="Group enriched (liver, testis)"/>
</dbReference>
<dbReference type="MalaCards" id="GLUD2"/>
<dbReference type="MIM" id="300144">
    <property type="type" value="gene"/>
</dbReference>
<dbReference type="neXtProt" id="NX_P49448"/>
<dbReference type="OpenTargets" id="ENSG00000182890"/>
<dbReference type="PharmGKB" id="PA28738"/>
<dbReference type="VEuPathDB" id="HostDB:ENSG00000182890"/>
<dbReference type="eggNOG" id="KOG2250">
    <property type="taxonomic scope" value="Eukaryota"/>
</dbReference>
<dbReference type="GeneTree" id="ENSGT00390000000854"/>
<dbReference type="HOGENOM" id="CLU_025763_1_0_1"/>
<dbReference type="InParanoid" id="P49448"/>
<dbReference type="OMA" id="KELMYHE"/>
<dbReference type="OrthoDB" id="6718861at2759"/>
<dbReference type="PAN-GO" id="P49448">
    <property type="GO annotations" value="3 GO annotations based on evolutionary models"/>
</dbReference>
<dbReference type="PhylomeDB" id="P49448"/>
<dbReference type="TreeFam" id="TF313945"/>
<dbReference type="BioCyc" id="MetaCyc:HS00018-MONOMER"/>
<dbReference type="BRENDA" id="1.4.1.3">
    <property type="organism ID" value="2681"/>
</dbReference>
<dbReference type="PathwayCommons" id="P49448"/>
<dbReference type="Reactome" id="R-HSA-2151201">
    <property type="pathway name" value="Transcriptional activation of mitochondrial biogenesis"/>
</dbReference>
<dbReference type="Reactome" id="R-HSA-8964539">
    <property type="pathway name" value="Glutamate and glutamine metabolism"/>
</dbReference>
<dbReference type="SABIO-RK" id="P49448"/>
<dbReference type="SignaLink" id="P49448"/>
<dbReference type="SIGNOR" id="P49448"/>
<dbReference type="BioGRID-ORCS" id="2747">
    <property type="hits" value="15 hits in 783 CRISPR screens"/>
</dbReference>
<dbReference type="CD-CODE" id="FB4E32DD">
    <property type="entry name" value="Presynaptic clusters and postsynaptic densities"/>
</dbReference>
<dbReference type="GeneWiki" id="GLUD2"/>
<dbReference type="GenomeRNAi" id="2747"/>
<dbReference type="Pharos" id="P49448">
    <property type="development level" value="Tbio"/>
</dbReference>
<dbReference type="PRO" id="PR:P49448"/>
<dbReference type="Proteomes" id="UP000005640">
    <property type="component" value="Chromosome X"/>
</dbReference>
<dbReference type="RNAct" id="P49448">
    <property type="molecule type" value="protein"/>
</dbReference>
<dbReference type="Bgee" id="ENSG00000182890">
    <property type="expression patterns" value="Expressed in right testis and 100 other cell types or tissues"/>
</dbReference>
<dbReference type="ExpressionAtlas" id="P49448">
    <property type="expression patterns" value="baseline and differential"/>
</dbReference>
<dbReference type="GO" id="GO:0005759">
    <property type="term" value="C:mitochondrial matrix"/>
    <property type="evidence" value="ECO:0007669"/>
    <property type="project" value="UniProtKB-SubCell"/>
</dbReference>
<dbReference type="GO" id="GO:0005739">
    <property type="term" value="C:mitochondrion"/>
    <property type="evidence" value="ECO:0000314"/>
    <property type="project" value="BHF-UCL"/>
</dbReference>
<dbReference type="GO" id="GO:0043531">
    <property type="term" value="F:ADP binding"/>
    <property type="evidence" value="ECO:0000314"/>
    <property type="project" value="BHF-UCL"/>
</dbReference>
<dbReference type="GO" id="GO:0004352">
    <property type="term" value="F:glutamate dehydrogenase (NAD+) activity"/>
    <property type="evidence" value="ECO:0000314"/>
    <property type="project" value="UniProtKB"/>
</dbReference>
<dbReference type="GO" id="GO:0004354">
    <property type="term" value="F:glutamate dehydrogenase (NADP+) activity"/>
    <property type="evidence" value="ECO:0007669"/>
    <property type="project" value="RHEA"/>
</dbReference>
<dbReference type="GO" id="GO:0004353">
    <property type="term" value="F:glutamate dehydrogenase [NAD(P)+] activity"/>
    <property type="evidence" value="ECO:0000314"/>
    <property type="project" value="BHF-UCL"/>
</dbReference>
<dbReference type="GO" id="GO:0005525">
    <property type="term" value="F:GTP binding"/>
    <property type="evidence" value="ECO:0000314"/>
    <property type="project" value="BHF-UCL"/>
</dbReference>
<dbReference type="GO" id="GO:0070728">
    <property type="term" value="F:L-leucine binding"/>
    <property type="evidence" value="ECO:0000314"/>
    <property type="project" value="BHF-UCL"/>
</dbReference>
<dbReference type="GO" id="GO:0006537">
    <property type="term" value="P:glutamate biosynthetic process"/>
    <property type="evidence" value="ECO:0000314"/>
    <property type="project" value="BHF-UCL"/>
</dbReference>
<dbReference type="GO" id="GO:0006538">
    <property type="term" value="P:glutamate catabolic process"/>
    <property type="evidence" value="ECO:0000314"/>
    <property type="project" value="BHF-UCL"/>
</dbReference>
<dbReference type="GO" id="GO:0006536">
    <property type="term" value="P:glutamate metabolic process"/>
    <property type="evidence" value="ECO:0000314"/>
    <property type="project" value="UniProtKB"/>
</dbReference>
<dbReference type="CDD" id="cd01076">
    <property type="entry name" value="NAD_bind_1_Glu_DH"/>
    <property type="match status" value="1"/>
</dbReference>
<dbReference type="FunFam" id="1.10.287.140:FF:000001">
    <property type="entry name" value="Glutamate dehydrogenase 1, mitochondrial"/>
    <property type="match status" value="1"/>
</dbReference>
<dbReference type="FunFam" id="3.40.50.10860:FF:000007">
    <property type="entry name" value="Glutamate dehydrogenase 1, mitochondrial"/>
    <property type="match status" value="1"/>
</dbReference>
<dbReference type="FunFam" id="3.40.50.720:FF:000100">
    <property type="entry name" value="Glutamate dehydrogenase 1, mitochondrial"/>
    <property type="match status" value="1"/>
</dbReference>
<dbReference type="Gene3D" id="1.10.287.140">
    <property type="match status" value="1"/>
</dbReference>
<dbReference type="Gene3D" id="3.40.50.10860">
    <property type="entry name" value="Leucine Dehydrogenase, chain A, domain 1"/>
    <property type="match status" value="1"/>
</dbReference>
<dbReference type="Gene3D" id="3.40.50.720">
    <property type="entry name" value="NAD(P)-binding Rossmann-like Domain"/>
    <property type="match status" value="1"/>
</dbReference>
<dbReference type="InterPro" id="IPR046346">
    <property type="entry name" value="Aminoacid_DH-like_N_sf"/>
</dbReference>
<dbReference type="InterPro" id="IPR006095">
    <property type="entry name" value="Glu/Leu/Phe/Val/Trp_DH"/>
</dbReference>
<dbReference type="InterPro" id="IPR006096">
    <property type="entry name" value="Glu/Leu/Phe/Val/Trp_DH_C"/>
</dbReference>
<dbReference type="InterPro" id="IPR006097">
    <property type="entry name" value="Glu/Leu/Phe/Val/Trp_DH_dimer"/>
</dbReference>
<dbReference type="InterPro" id="IPR033524">
    <property type="entry name" value="Glu/Leu/Phe/Val_DH_AS"/>
</dbReference>
<dbReference type="InterPro" id="IPR036291">
    <property type="entry name" value="NAD(P)-bd_dom_sf"/>
</dbReference>
<dbReference type="InterPro" id="IPR033922">
    <property type="entry name" value="NAD_bind_Glu_DH"/>
</dbReference>
<dbReference type="PANTHER" id="PTHR11606">
    <property type="entry name" value="GLUTAMATE DEHYDROGENASE"/>
    <property type="match status" value="1"/>
</dbReference>
<dbReference type="PANTHER" id="PTHR11606:SF15">
    <property type="entry name" value="GLUTAMATE DEHYDROGENASE 2, MITOCHONDRIAL"/>
    <property type="match status" value="1"/>
</dbReference>
<dbReference type="Pfam" id="PF00208">
    <property type="entry name" value="ELFV_dehydrog"/>
    <property type="match status" value="1"/>
</dbReference>
<dbReference type="Pfam" id="PF02812">
    <property type="entry name" value="ELFV_dehydrog_N"/>
    <property type="match status" value="1"/>
</dbReference>
<dbReference type="PRINTS" id="PR00082">
    <property type="entry name" value="GLFDHDRGNASE"/>
</dbReference>
<dbReference type="SMART" id="SM00839">
    <property type="entry name" value="ELFV_dehydrog"/>
    <property type="match status" value="1"/>
</dbReference>
<dbReference type="SUPFAM" id="SSF53223">
    <property type="entry name" value="Aminoacid dehydrogenase-like, N-terminal domain"/>
    <property type="match status" value="1"/>
</dbReference>
<dbReference type="SUPFAM" id="SSF51735">
    <property type="entry name" value="NAD(P)-binding Rossmann-fold domains"/>
    <property type="match status" value="1"/>
</dbReference>
<dbReference type="PROSITE" id="PS00074">
    <property type="entry name" value="GLFV_DEHYDROGENASE"/>
    <property type="match status" value="1"/>
</dbReference>
<sequence>MYRYLAKALLPSRAGPAALGSAANHSAALLGRGRGQPAAASQPGLALAARRHYSELVADREDDPNFFKMVEGFFDRGASIVEDKLVKDLRTQESEEQKRNRVRGILRIIKPCNHVLSLSFPIRRDDGSWEVIEGYRAQHSQHRTPCKGGIRYSTDVSVDEVKALASLMTYKCAVVDVPFGGAKAGVKINPKNYTENELEKITRRFTMELAKKGFIGPGVDVPAPDMNTGEREMSWIADTYASTIGHYDINAHACVTGKPISQGGIHGRISATGRGVFHGIENFINEASYMSILGMTPGFRDKTFVVQGFGNVGLHSMRYLHRFGAKCIAVGESDGSIWNPDGIDPKELEDFKLQHGSILGFPKAKPYEGSILEVDCDILIPAATEKQLTKSNAPRVKAKIIAEGANGPTTPEADKIFLERNILVIPDLYLNAGGVTVSYFEWLKNLNHVSYGRLTFKYERDSNYHLLLSVQESLERKFGKHGGTIPIVPTAEFQDSISGASEKDIVHSALAYTMERSARQIMHTAMKYNLGLDLRTAAYVNAIEKVFKVYSEAGVTFT</sequence>
<keyword id="KW-0002">3D-structure</keyword>
<keyword id="KW-0013">ADP-ribosylation</keyword>
<keyword id="KW-0496">Mitochondrion</keyword>
<keyword id="KW-0521">NADP</keyword>
<keyword id="KW-0560">Oxidoreductase</keyword>
<keyword id="KW-1267">Proteomics identification</keyword>
<keyword id="KW-1185">Reference proteome</keyword>
<keyword id="KW-0809">Transit peptide</keyword>
<accession>P49448</accession>
<accession>B2R8G0</accession>
<accession>Q9UDQ4</accession>
<evidence type="ECO:0000250" key="1"/>
<evidence type="ECO:0000255" key="2">
    <source>
        <dbReference type="PROSITE-ProRule" id="PRU10011"/>
    </source>
</evidence>
<evidence type="ECO:0000269" key="3">
    <source>
    </source>
</evidence>
<evidence type="ECO:0000269" key="4">
    <source>
    </source>
</evidence>
<evidence type="ECO:0000305" key="5"/>
<evidence type="ECO:0007829" key="6">
    <source>
        <dbReference type="PDB" id="6G2U"/>
    </source>
</evidence>
<name>DHE4_HUMAN</name>
<gene>
    <name type="primary">GLUD2</name>
    <name type="synonym">GLUDP1</name>
</gene>
<feature type="transit peptide" description="Mitochondrion" evidence="4">
    <location>
        <begin position="1"/>
        <end position="53"/>
    </location>
</feature>
<feature type="chain" id="PRO_0000007208" description="Glutamate dehydrogenase 2, mitochondrial">
    <location>
        <begin position="54"/>
        <end position="558"/>
    </location>
</feature>
<feature type="active site" evidence="2">
    <location>
        <position position="183"/>
    </location>
</feature>
<feature type="binding site" evidence="1">
    <location>
        <position position="84"/>
    </location>
    <ligand>
        <name>substrate</name>
    </ligand>
</feature>
<feature type="modified residue" description="ADP-ribosylcysteine" evidence="3">
    <location>
        <position position="172"/>
    </location>
</feature>
<feature type="sequence variant" id="VAR_048867" description="In dbSNP:rs9697983.">
    <original>S</original>
    <variation>A</variation>
    <location>
        <position position="498"/>
    </location>
</feature>
<feature type="sequence conflict" description="In Ref. 1; CAA46995/AAA20969." evidence="5" ref="1">
    <original>E</original>
    <variation>Q</variation>
    <location>
        <position position="286"/>
    </location>
</feature>
<feature type="helix" evidence="6">
    <location>
        <begin position="66"/>
        <end position="87"/>
    </location>
</feature>
<feature type="helix" evidence="6">
    <location>
        <begin position="95"/>
        <end position="109"/>
    </location>
</feature>
<feature type="strand" evidence="6">
    <location>
        <begin position="113"/>
        <end position="123"/>
    </location>
</feature>
<feature type="strand" evidence="6">
    <location>
        <begin position="129"/>
        <end position="138"/>
    </location>
</feature>
<feature type="strand" evidence="6">
    <location>
        <begin position="142"/>
        <end position="152"/>
    </location>
</feature>
<feature type="helix" evidence="6">
    <location>
        <begin position="158"/>
        <end position="174"/>
    </location>
</feature>
<feature type="strand" evidence="6">
    <location>
        <begin position="180"/>
        <end position="186"/>
    </location>
</feature>
<feature type="helix" evidence="6">
    <location>
        <begin position="190"/>
        <end position="192"/>
    </location>
</feature>
<feature type="helix" evidence="6">
    <location>
        <begin position="195"/>
        <end position="211"/>
    </location>
</feature>
<feature type="turn" evidence="6">
    <location>
        <begin position="217"/>
        <end position="219"/>
    </location>
</feature>
<feature type="strand" evidence="6">
    <location>
        <begin position="220"/>
        <end position="223"/>
    </location>
</feature>
<feature type="helix" evidence="6">
    <location>
        <begin position="230"/>
        <end position="242"/>
    </location>
</feature>
<feature type="turn" evidence="6">
    <location>
        <begin position="243"/>
        <end position="245"/>
    </location>
</feature>
<feature type="helix" evidence="6">
    <location>
        <begin position="251"/>
        <end position="254"/>
    </location>
</feature>
<feature type="helix" evidence="6">
    <location>
        <begin position="260"/>
        <end position="262"/>
    </location>
</feature>
<feature type="helix" evidence="6">
    <location>
        <begin position="271"/>
        <end position="284"/>
    </location>
</feature>
<feature type="helix" evidence="6">
    <location>
        <begin position="287"/>
        <end position="293"/>
    </location>
</feature>
<feature type="strand" evidence="6">
    <location>
        <begin position="297"/>
        <end position="299"/>
    </location>
</feature>
<feature type="strand" evidence="6">
    <location>
        <begin position="303"/>
        <end position="307"/>
    </location>
</feature>
<feature type="helix" evidence="6">
    <location>
        <begin position="311"/>
        <end position="322"/>
    </location>
</feature>
<feature type="strand" evidence="6">
    <location>
        <begin position="326"/>
        <end position="331"/>
    </location>
</feature>
<feature type="strand" evidence="6">
    <location>
        <begin position="336"/>
        <end position="338"/>
    </location>
</feature>
<feature type="helix" evidence="6">
    <location>
        <begin position="345"/>
        <end position="355"/>
    </location>
</feature>
<feature type="strand" evidence="6">
    <location>
        <begin position="364"/>
        <end position="367"/>
    </location>
</feature>
<feature type="helix" evidence="6">
    <location>
        <begin position="371"/>
        <end position="373"/>
    </location>
</feature>
<feature type="strand" evidence="6">
    <location>
        <begin position="375"/>
        <end position="381"/>
    </location>
</feature>
<feature type="strand" evidence="6">
    <location>
        <begin position="383"/>
        <end position="386"/>
    </location>
</feature>
<feature type="turn" evidence="6">
    <location>
        <begin position="390"/>
        <end position="392"/>
    </location>
</feature>
<feature type="helix" evidence="6">
    <location>
        <begin position="393"/>
        <end position="395"/>
    </location>
</feature>
<feature type="strand" evidence="6">
    <location>
        <begin position="399"/>
        <end position="402"/>
    </location>
</feature>
<feature type="strand" evidence="6">
    <location>
        <begin position="405"/>
        <end position="407"/>
    </location>
</feature>
<feature type="helix" evidence="6">
    <location>
        <begin position="411"/>
        <end position="419"/>
    </location>
</feature>
<feature type="strand" evidence="6">
    <location>
        <begin position="423"/>
        <end position="425"/>
    </location>
</feature>
<feature type="helix" evidence="6">
    <location>
        <begin position="427"/>
        <end position="430"/>
    </location>
</feature>
<feature type="helix" evidence="6">
    <location>
        <begin position="433"/>
        <end position="447"/>
    </location>
</feature>
<feature type="turn" evidence="6">
    <location>
        <begin position="451"/>
        <end position="455"/>
    </location>
</feature>
<feature type="helix" evidence="6">
    <location>
        <begin position="456"/>
        <end position="477"/>
    </location>
</feature>
<feature type="helix" evidence="6">
    <location>
        <begin position="491"/>
        <end position="497"/>
    </location>
</feature>
<feature type="helix" evidence="6">
    <location>
        <begin position="502"/>
        <end position="527"/>
    </location>
</feature>
<feature type="helix" evidence="6">
    <location>
        <begin position="534"/>
        <end position="551"/>
    </location>
</feature>
<protein>
    <recommendedName>
        <fullName>Glutamate dehydrogenase 2, mitochondrial</fullName>
        <shortName>GDH 2</shortName>
        <ecNumber>1.4.1.3</ecNumber>
    </recommendedName>
</protein>
<reference key="1">
    <citation type="journal article" date="1994" name="J. Biol. Chem.">
        <title>Novel human glutamate dehydrogenase expressed in neural and testicular tissues and encoded by an X-linked intronless gene.</title>
        <authorList>
            <person name="Shashidharan P."/>
            <person name="Michaelidis T.M."/>
            <person name="Robakis N.K."/>
            <person name="Kresovali A."/>
            <person name="Papamatheakis J."/>
            <person name="Plaitakis A."/>
        </authorList>
    </citation>
    <scope>NUCLEOTIDE SEQUENCE [GENOMIC DNA]</scope>
    <source>
        <tissue>Retina</tissue>
    </source>
</reference>
<reference key="2">
    <citation type="journal article" date="2004" name="Nat. Genet.">
        <title>Complete sequencing and characterization of 21,243 full-length human cDNAs.</title>
        <authorList>
            <person name="Ota T."/>
            <person name="Suzuki Y."/>
            <person name="Nishikawa T."/>
            <person name="Otsuki T."/>
            <person name="Sugiyama T."/>
            <person name="Irie R."/>
            <person name="Wakamatsu A."/>
            <person name="Hayashi K."/>
            <person name="Sato H."/>
            <person name="Nagai K."/>
            <person name="Kimura K."/>
            <person name="Makita H."/>
            <person name="Sekine M."/>
            <person name="Obayashi M."/>
            <person name="Nishi T."/>
            <person name="Shibahara T."/>
            <person name="Tanaka T."/>
            <person name="Ishii S."/>
            <person name="Yamamoto J."/>
            <person name="Saito K."/>
            <person name="Kawai Y."/>
            <person name="Isono Y."/>
            <person name="Nakamura Y."/>
            <person name="Nagahari K."/>
            <person name="Murakami K."/>
            <person name="Yasuda T."/>
            <person name="Iwayanagi T."/>
            <person name="Wagatsuma M."/>
            <person name="Shiratori A."/>
            <person name="Sudo H."/>
            <person name="Hosoiri T."/>
            <person name="Kaku Y."/>
            <person name="Kodaira H."/>
            <person name="Kondo H."/>
            <person name="Sugawara M."/>
            <person name="Takahashi M."/>
            <person name="Kanda K."/>
            <person name="Yokoi T."/>
            <person name="Furuya T."/>
            <person name="Kikkawa E."/>
            <person name="Omura Y."/>
            <person name="Abe K."/>
            <person name="Kamihara K."/>
            <person name="Katsuta N."/>
            <person name="Sato K."/>
            <person name="Tanikawa M."/>
            <person name="Yamazaki M."/>
            <person name="Ninomiya K."/>
            <person name="Ishibashi T."/>
            <person name="Yamashita H."/>
            <person name="Murakawa K."/>
            <person name="Fujimori K."/>
            <person name="Tanai H."/>
            <person name="Kimata M."/>
            <person name="Watanabe M."/>
            <person name="Hiraoka S."/>
            <person name="Chiba Y."/>
            <person name="Ishida S."/>
            <person name="Ono Y."/>
            <person name="Takiguchi S."/>
            <person name="Watanabe S."/>
            <person name="Yosida M."/>
            <person name="Hotuta T."/>
            <person name="Kusano J."/>
            <person name="Kanehori K."/>
            <person name="Takahashi-Fujii A."/>
            <person name="Hara H."/>
            <person name="Tanase T.-O."/>
            <person name="Nomura Y."/>
            <person name="Togiya S."/>
            <person name="Komai F."/>
            <person name="Hara R."/>
            <person name="Takeuchi K."/>
            <person name="Arita M."/>
            <person name="Imose N."/>
            <person name="Musashino K."/>
            <person name="Yuuki H."/>
            <person name="Oshima A."/>
            <person name="Sasaki N."/>
            <person name="Aotsuka S."/>
            <person name="Yoshikawa Y."/>
            <person name="Matsunawa H."/>
            <person name="Ichihara T."/>
            <person name="Shiohata N."/>
            <person name="Sano S."/>
            <person name="Moriya S."/>
            <person name="Momiyama H."/>
            <person name="Satoh N."/>
            <person name="Takami S."/>
            <person name="Terashima Y."/>
            <person name="Suzuki O."/>
            <person name="Nakagawa S."/>
            <person name="Senoh A."/>
            <person name="Mizoguchi H."/>
            <person name="Goto Y."/>
            <person name="Shimizu F."/>
            <person name="Wakebe H."/>
            <person name="Hishigaki H."/>
            <person name="Watanabe T."/>
            <person name="Sugiyama A."/>
            <person name="Takemoto M."/>
            <person name="Kawakami B."/>
            <person name="Yamazaki M."/>
            <person name="Watanabe K."/>
            <person name="Kumagai A."/>
            <person name="Itakura S."/>
            <person name="Fukuzumi Y."/>
            <person name="Fujimori Y."/>
            <person name="Komiyama M."/>
            <person name="Tashiro H."/>
            <person name="Tanigami A."/>
            <person name="Fujiwara T."/>
            <person name="Ono T."/>
            <person name="Yamada K."/>
            <person name="Fujii Y."/>
            <person name="Ozaki K."/>
            <person name="Hirao M."/>
            <person name="Ohmori Y."/>
            <person name="Kawabata A."/>
            <person name="Hikiji T."/>
            <person name="Kobatake N."/>
            <person name="Inagaki H."/>
            <person name="Ikema Y."/>
            <person name="Okamoto S."/>
            <person name="Okitani R."/>
            <person name="Kawakami T."/>
            <person name="Noguchi S."/>
            <person name="Itoh T."/>
            <person name="Shigeta K."/>
            <person name="Senba T."/>
            <person name="Matsumura K."/>
            <person name="Nakajima Y."/>
            <person name="Mizuno T."/>
            <person name="Morinaga M."/>
            <person name="Sasaki M."/>
            <person name="Togashi T."/>
            <person name="Oyama M."/>
            <person name="Hata H."/>
            <person name="Watanabe M."/>
            <person name="Komatsu T."/>
            <person name="Mizushima-Sugano J."/>
            <person name="Satoh T."/>
            <person name="Shirai Y."/>
            <person name="Takahashi Y."/>
            <person name="Nakagawa K."/>
            <person name="Okumura K."/>
            <person name="Nagase T."/>
            <person name="Nomura N."/>
            <person name="Kikuchi H."/>
            <person name="Masuho Y."/>
            <person name="Yamashita R."/>
            <person name="Nakai K."/>
            <person name="Yada T."/>
            <person name="Nakamura Y."/>
            <person name="Ohara O."/>
            <person name="Isogai T."/>
            <person name="Sugano S."/>
        </authorList>
    </citation>
    <scope>NUCLEOTIDE SEQUENCE [LARGE SCALE MRNA]</scope>
    <source>
        <tissue>Testis</tissue>
    </source>
</reference>
<reference key="3">
    <citation type="journal article" date="2005" name="Nature">
        <title>The DNA sequence of the human X chromosome.</title>
        <authorList>
            <person name="Ross M.T."/>
            <person name="Grafham D.V."/>
            <person name="Coffey A.J."/>
            <person name="Scherer S."/>
            <person name="McLay K."/>
            <person name="Muzny D."/>
            <person name="Platzer M."/>
            <person name="Howell G.R."/>
            <person name="Burrows C."/>
            <person name="Bird C.P."/>
            <person name="Frankish A."/>
            <person name="Lovell F.L."/>
            <person name="Howe K.L."/>
            <person name="Ashurst J.L."/>
            <person name="Fulton R.S."/>
            <person name="Sudbrak R."/>
            <person name="Wen G."/>
            <person name="Jones M.C."/>
            <person name="Hurles M.E."/>
            <person name="Andrews T.D."/>
            <person name="Scott C.E."/>
            <person name="Searle S."/>
            <person name="Ramser J."/>
            <person name="Whittaker A."/>
            <person name="Deadman R."/>
            <person name="Carter N.P."/>
            <person name="Hunt S.E."/>
            <person name="Chen R."/>
            <person name="Cree A."/>
            <person name="Gunaratne P."/>
            <person name="Havlak P."/>
            <person name="Hodgson A."/>
            <person name="Metzker M.L."/>
            <person name="Richards S."/>
            <person name="Scott G."/>
            <person name="Steffen D."/>
            <person name="Sodergren E."/>
            <person name="Wheeler D.A."/>
            <person name="Worley K.C."/>
            <person name="Ainscough R."/>
            <person name="Ambrose K.D."/>
            <person name="Ansari-Lari M.A."/>
            <person name="Aradhya S."/>
            <person name="Ashwell R.I."/>
            <person name="Babbage A.K."/>
            <person name="Bagguley C.L."/>
            <person name="Ballabio A."/>
            <person name="Banerjee R."/>
            <person name="Barker G.E."/>
            <person name="Barlow K.F."/>
            <person name="Barrett I.P."/>
            <person name="Bates K.N."/>
            <person name="Beare D.M."/>
            <person name="Beasley H."/>
            <person name="Beasley O."/>
            <person name="Beck A."/>
            <person name="Bethel G."/>
            <person name="Blechschmidt K."/>
            <person name="Brady N."/>
            <person name="Bray-Allen S."/>
            <person name="Bridgeman A.M."/>
            <person name="Brown A.J."/>
            <person name="Brown M.J."/>
            <person name="Bonnin D."/>
            <person name="Bruford E.A."/>
            <person name="Buhay C."/>
            <person name="Burch P."/>
            <person name="Burford D."/>
            <person name="Burgess J."/>
            <person name="Burrill W."/>
            <person name="Burton J."/>
            <person name="Bye J.M."/>
            <person name="Carder C."/>
            <person name="Carrel L."/>
            <person name="Chako J."/>
            <person name="Chapman J.C."/>
            <person name="Chavez D."/>
            <person name="Chen E."/>
            <person name="Chen G."/>
            <person name="Chen Y."/>
            <person name="Chen Z."/>
            <person name="Chinault C."/>
            <person name="Ciccodicola A."/>
            <person name="Clark S.Y."/>
            <person name="Clarke G."/>
            <person name="Clee C.M."/>
            <person name="Clegg S."/>
            <person name="Clerc-Blankenburg K."/>
            <person name="Clifford K."/>
            <person name="Cobley V."/>
            <person name="Cole C.G."/>
            <person name="Conquer J.S."/>
            <person name="Corby N."/>
            <person name="Connor R.E."/>
            <person name="David R."/>
            <person name="Davies J."/>
            <person name="Davis C."/>
            <person name="Davis J."/>
            <person name="Delgado O."/>
            <person name="Deshazo D."/>
            <person name="Dhami P."/>
            <person name="Ding Y."/>
            <person name="Dinh H."/>
            <person name="Dodsworth S."/>
            <person name="Draper H."/>
            <person name="Dugan-Rocha S."/>
            <person name="Dunham A."/>
            <person name="Dunn M."/>
            <person name="Durbin K.J."/>
            <person name="Dutta I."/>
            <person name="Eades T."/>
            <person name="Ellwood M."/>
            <person name="Emery-Cohen A."/>
            <person name="Errington H."/>
            <person name="Evans K.L."/>
            <person name="Faulkner L."/>
            <person name="Francis F."/>
            <person name="Frankland J."/>
            <person name="Fraser A.E."/>
            <person name="Galgoczy P."/>
            <person name="Gilbert J."/>
            <person name="Gill R."/>
            <person name="Gloeckner G."/>
            <person name="Gregory S.G."/>
            <person name="Gribble S."/>
            <person name="Griffiths C."/>
            <person name="Grocock R."/>
            <person name="Gu Y."/>
            <person name="Gwilliam R."/>
            <person name="Hamilton C."/>
            <person name="Hart E.A."/>
            <person name="Hawes A."/>
            <person name="Heath P.D."/>
            <person name="Heitmann K."/>
            <person name="Hennig S."/>
            <person name="Hernandez J."/>
            <person name="Hinzmann B."/>
            <person name="Ho S."/>
            <person name="Hoffs M."/>
            <person name="Howden P.J."/>
            <person name="Huckle E.J."/>
            <person name="Hume J."/>
            <person name="Hunt P.J."/>
            <person name="Hunt A.R."/>
            <person name="Isherwood J."/>
            <person name="Jacob L."/>
            <person name="Johnson D."/>
            <person name="Jones S."/>
            <person name="de Jong P.J."/>
            <person name="Joseph S.S."/>
            <person name="Keenan S."/>
            <person name="Kelly S."/>
            <person name="Kershaw J.K."/>
            <person name="Khan Z."/>
            <person name="Kioschis P."/>
            <person name="Klages S."/>
            <person name="Knights A.J."/>
            <person name="Kosiura A."/>
            <person name="Kovar-Smith C."/>
            <person name="Laird G.K."/>
            <person name="Langford C."/>
            <person name="Lawlor S."/>
            <person name="Leversha M."/>
            <person name="Lewis L."/>
            <person name="Liu W."/>
            <person name="Lloyd C."/>
            <person name="Lloyd D.M."/>
            <person name="Loulseged H."/>
            <person name="Loveland J.E."/>
            <person name="Lovell J.D."/>
            <person name="Lozado R."/>
            <person name="Lu J."/>
            <person name="Lyne R."/>
            <person name="Ma J."/>
            <person name="Maheshwari M."/>
            <person name="Matthews L.H."/>
            <person name="McDowall J."/>
            <person name="McLaren S."/>
            <person name="McMurray A."/>
            <person name="Meidl P."/>
            <person name="Meitinger T."/>
            <person name="Milne S."/>
            <person name="Miner G."/>
            <person name="Mistry S.L."/>
            <person name="Morgan M."/>
            <person name="Morris S."/>
            <person name="Mueller I."/>
            <person name="Mullikin J.C."/>
            <person name="Nguyen N."/>
            <person name="Nordsiek G."/>
            <person name="Nyakatura G."/>
            <person name="O'dell C.N."/>
            <person name="Okwuonu G."/>
            <person name="Palmer S."/>
            <person name="Pandian R."/>
            <person name="Parker D."/>
            <person name="Parrish J."/>
            <person name="Pasternak S."/>
            <person name="Patel D."/>
            <person name="Pearce A.V."/>
            <person name="Pearson D.M."/>
            <person name="Pelan S.E."/>
            <person name="Perez L."/>
            <person name="Porter K.M."/>
            <person name="Ramsey Y."/>
            <person name="Reichwald K."/>
            <person name="Rhodes S."/>
            <person name="Ridler K.A."/>
            <person name="Schlessinger D."/>
            <person name="Schueler M.G."/>
            <person name="Sehra H.K."/>
            <person name="Shaw-Smith C."/>
            <person name="Shen H."/>
            <person name="Sheridan E.M."/>
            <person name="Shownkeen R."/>
            <person name="Skuce C.D."/>
            <person name="Smith M.L."/>
            <person name="Sotheran E.C."/>
            <person name="Steingruber H.E."/>
            <person name="Steward C.A."/>
            <person name="Storey R."/>
            <person name="Swann R.M."/>
            <person name="Swarbreck D."/>
            <person name="Tabor P.E."/>
            <person name="Taudien S."/>
            <person name="Taylor T."/>
            <person name="Teague B."/>
            <person name="Thomas K."/>
            <person name="Thorpe A."/>
            <person name="Timms K."/>
            <person name="Tracey A."/>
            <person name="Trevanion S."/>
            <person name="Tromans A.C."/>
            <person name="d'Urso M."/>
            <person name="Verduzco D."/>
            <person name="Villasana D."/>
            <person name="Waldron L."/>
            <person name="Wall M."/>
            <person name="Wang Q."/>
            <person name="Warren J."/>
            <person name="Warry G.L."/>
            <person name="Wei X."/>
            <person name="West A."/>
            <person name="Whitehead S.L."/>
            <person name="Whiteley M.N."/>
            <person name="Wilkinson J.E."/>
            <person name="Willey D.L."/>
            <person name="Williams G."/>
            <person name="Williams L."/>
            <person name="Williamson A."/>
            <person name="Williamson H."/>
            <person name="Wilming L."/>
            <person name="Woodmansey R.L."/>
            <person name="Wray P.W."/>
            <person name="Yen J."/>
            <person name="Zhang J."/>
            <person name="Zhou J."/>
            <person name="Zoghbi H."/>
            <person name="Zorilla S."/>
            <person name="Buck D."/>
            <person name="Reinhardt R."/>
            <person name="Poustka A."/>
            <person name="Rosenthal A."/>
            <person name="Lehrach H."/>
            <person name="Meindl A."/>
            <person name="Minx P.J."/>
            <person name="Hillier L.W."/>
            <person name="Willard H.F."/>
            <person name="Wilson R.K."/>
            <person name="Waterston R.H."/>
            <person name="Rice C.M."/>
            <person name="Vaudin M."/>
            <person name="Coulson A."/>
            <person name="Nelson D.L."/>
            <person name="Weinstock G."/>
            <person name="Sulston J.E."/>
            <person name="Durbin R.M."/>
            <person name="Hubbard T."/>
            <person name="Gibbs R.A."/>
            <person name="Beck S."/>
            <person name="Rogers J."/>
            <person name="Bentley D.R."/>
        </authorList>
    </citation>
    <scope>NUCLEOTIDE SEQUENCE [LARGE SCALE GENOMIC DNA]</scope>
</reference>
<reference key="4">
    <citation type="journal article" date="2004" name="Genome Res.">
        <title>The status, quality, and expansion of the NIH full-length cDNA project: the Mammalian Gene Collection (MGC).</title>
        <authorList>
            <consortium name="The MGC Project Team"/>
        </authorList>
    </citation>
    <scope>NUCLEOTIDE SEQUENCE [LARGE SCALE MRNA]</scope>
    <source>
        <tissue>Skin</tissue>
    </source>
</reference>
<reference key="5">
    <citation type="journal article" date="2005" name="FEBS Lett.">
        <title>Identification of ADP-ribosylation site in human glutamate dehydrogenase isozymes.</title>
        <authorList>
            <person name="Choi M.M."/>
            <person name="Huh J.W."/>
            <person name="Yang S.J."/>
            <person name="Cho E.H."/>
            <person name="Choi S.Y."/>
            <person name="Cho S.W."/>
        </authorList>
    </citation>
    <scope>ADP-RIBOSYLATION AT CYS-172</scope>
</reference>
<reference key="6">
    <citation type="journal article" date="2011" name="BMC Syst. Biol.">
        <title>Initial characterization of the human central proteome.</title>
        <authorList>
            <person name="Burkard T.R."/>
            <person name="Planyavsky M."/>
            <person name="Kaupe I."/>
            <person name="Breitwieser F.P."/>
            <person name="Buerckstuemmer T."/>
            <person name="Bennett K.L."/>
            <person name="Superti-Furga G."/>
            <person name="Colinge J."/>
        </authorList>
    </citation>
    <scope>IDENTIFICATION BY MASS SPECTROMETRY [LARGE SCALE ANALYSIS]</scope>
</reference>
<reference key="7">
    <citation type="journal article" date="2012" name="Neurochem. Int.">
        <title>Alpha helical structures in the leader sequence of human GLUD2 glutamate dehydrogenase responsible for mitochondrial import.</title>
        <authorList>
            <person name="Kotzamani D."/>
            <person name="Plaitakis A."/>
        </authorList>
    </citation>
    <scope>TRANSIT PEPTIDE CLEAVAGE SITE</scope>
    <scope>SUBCELLULAR LOCATION</scope>
</reference>
<proteinExistence type="evidence at protein level"/>